<keyword id="KW-0028">Amino-acid biosynthesis</keyword>
<keyword id="KW-0963">Cytoplasm</keyword>
<keyword id="KW-0315">Glutamine amidotransferase</keyword>
<keyword id="KW-0368">Histidine biosynthesis</keyword>
<keyword id="KW-0378">Hydrolase</keyword>
<keyword id="KW-0456">Lyase</keyword>
<dbReference type="EC" id="4.3.2.10" evidence="1"/>
<dbReference type="EC" id="3.5.1.2" evidence="1"/>
<dbReference type="EMBL" id="CP000117">
    <property type="protein sequence ID" value="ABA23622.1"/>
    <property type="molecule type" value="Genomic_DNA"/>
</dbReference>
<dbReference type="SMR" id="Q3M5W4"/>
<dbReference type="STRING" id="240292.Ava_4017"/>
<dbReference type="KEGG" id="ava:Ava_4017"/>
<dbReference type="eggNOG" id="COG0118">
    <property type="taxonomic scope" value="Bacteria"/>
</dbReference>
<dbReference type="HOGENOM" id="CLU_071837_2_2_3"/>
<dbReference type="UniPathway" id="UPA00031">
    <property type="reaction ID" value="UER00010"/>
</dbReference>
<dbReference type="Proteomes" id="UP000002533">
    <property type="component" value="Chromosome"/>
</dbReference>
<dbReference type="GO" id="GO:0005737">
    <property type="term" value="C:cytoplasm"/>
    <property type="evidence" value="ECO:0007669"/>
    <property type="project" value="UniProtKB-SubCell"/>
</dbReference>
<dbReference type="GO" id="GO:0004359">
    <property type="term" value="F:glutaminase activity"/>
    <property type="evidence" value="ECO:0007669"/>
    <property type="project" value="UniProtKB-EC"/>
</dbReference>
<dbReference type="GO" id="GO:0000107">
    <property type="term" value="F:imidazoleglycerol-phosphate synthase activity"/>
    <property type="evidence" value="ECO:0007669"/>
    <property type="project" value="UniProtKB-UniRule"/>
</dbReference>
<dbReference type="GO" id="GO:0016829">
    <property type="term" value="F:lyase activity"/>
    <property type="evidence" value="ECO:0007669"/>
    <property type="project" value="UniProtKB-KW"/>
</dbReference>
<dbReference type="GO" id="GO:0000105">
    <property type="term" value="P:L-histidine biosynthetic process"/>
    <property type="evidence" value="ECO:0007669"/>
    <property type="project" value="UniProtKB-UniRule"/>
</dbReference>
<dbReference type="CDD" id="cd01748">
    <property type="entry name" value="GATase1_IGP_Synthase"/>
    <property type="match status" value="1"/>
</dbReference>
<dbReference type="FunFam" id="3.40.50.880:FF:000009">
    <property type="entry name" value="Imidazole glycerol phosphate synthase subunit HisH"/>
    <property type="match status" value="1"/>
</dbReference>
<dbReference type="Gene3D" id="3.40.50.880">
    <property type="match status" value="1"/>
</dbReference>
<dbReference type="HAMAP" id="MF_00278">
    <property type="entry name" value="HisH"/>
    <property type="match status" value="1"/>
</dbReference>
<dbReference type="InterPro" id="IPR029062">
    <property type="entry name" value="Class_I_gatase-like"/>
</dbReference>
<dbReference type="InterPro" id="IPR017926">
    <property type="entry name" value="GATASE"/>
</dbReference>
<dbReference type="InterPro" id="IPR010139">
    <property type="entry name" value="Imidazole-glycPsynth_HisH"/>
</dbReference>
<dbReference type="NCBIfam" id="TIGR01855">
    <property type="entry name" value="IMP_synth_hisH"/>
    <property type="match status" value="1"/>
</dbReference>
<dbReference type="PANTHER" id="PTHR42701">
    <property type="entry name" value="IMIDAZOLE GLYCEROL PHOSPHATE SYNTHASE SUBUNIT HISH"/>
    <property type="match status" value="1"/>
</dbReference>
<dbReference type="PANTHER" id="PTHR42701:SF1">
    <property type="entry name" value="IMIDAZOLE GLYCEROL PHOSPHATE SYNTHASE SUBUNIT HISH"/>
    <property type="match status" value="1"/>
</dbReference>
<dbReference type="Pfam" id="PF00117">
    <property type="entry name" value="GATase"/>
    <property type="match status" value="1"/>
</dbReference>
<dbReference type="PIRSF" id="PIRSF000495">
    <property type="entry name" value="Amidotransf_hisH"/>
    <property type="match status" value="1"/>
</dbReference>
<dbReference type="SUPFAM" id="SSF52317">
    <property type="entry name" value="Class I glutamine amidotransferase-like"/>
    <property type="match status" value="1"/>
</dbReference>
<dbReference type="PROSITE" id="PS51273">
    <property type="entry name" value="GATASE_TYPE_1"/>
    <property type="match status" value="1"/>
</dbReference>
<proteinExistence type="inferred from homology"/>
<organism>
    <name type="scientific">Trichormus variabilis (strain ATCC 29413 / PCC 7937)</name>
    <name type="common">Anabaena variabilis</name>
    <dbReference type="NCBI Taxonomy" id="240292"/>
    <lineage>
        <taxon>Bacteria</taxon>
        <taxon>Bacillati</taxon>
        <taxon>Cyanobacteriota</taxon>
        <taxon>Cyanophyceae</taxon>
        <taxon>Nostocales</taxon>
        <taxon>Nostocaceae</taxon>
        <taxon>Trichormus</taxon>
    </lineage>
</organism>
<reference key="1">
    <citation type="journal article" date="2014" name="Stand. Genomic Sci.">
        <title>Complete genome sequence of Anabaena variabilis ATCC 29413.</title>
        <authorList>
            <person name="Thiel T."/>
            <person name="Pratte B.S."/>
            <person name="Zhong J."/>
            <person name="Goodwin L."/>
            <person name="Copeland A."/>
            <person name="Lucas S."/>
            <person name="Han C."/>
            <person name="Pitluck S."/>
            <person name="Land M.L."/>
            <person name="Kyrpides N.C."/>
            <person name="Woyke T."/>
        </authorList>
    </citation>
    <scope>NUCLEOTIDE SEQUENCE [LARGE SCALE GENOMIC DNA]</scope>
    <source>
        <strain>ATCC 29413 / PCC 7937</strain>
    </source>
</reference>
<comment type="function">
    <text evidence="1">IGPS catalyzes the conversion of PRFAR and glutamine to IGP, AICAR and glutamate. The HisH subunit catalyzes the hydrolysis of glutamine to glutamate and ammonia as part of the synthesis of IGP and AICAR. The resulting ammonia molecule is channeled to the active site of HisF.</text>
</comment>
<comment type="catalytic activity">
    <reaction evidence="1">
        <text>5-[(5-phospho-1-deoxy-D-ribulos-1-ylimino)methylamino]-1-(5-phospho-beta-D-ribosyl)imidazole-4-carboxamide + L-glutamine = D-erythro-1-(imidazol-4-yl)glycerol 3-phosphate + 5-amino-1-(5-phospho-beta-D-ribosyl)imidazole-4-carboxamide + L-glutamate + H(+)</text>
        <dbReference type="Rhea" id="RHEA:24793"/>
        <dbReference type="ChEBI" id="CHEBI:15378"/>
        <dbReference type="ChEBI" id="CHEBI:29985"/>
        <dbReference type="ChEBI" id="CHEBI:58278"/>
        <dbReference type="ChEBI" id="CHEBI:58359"/>
        <dbReference type="ChEBI" id="CHEBI:58475"/>
        <dbReference type="ChEBI" id="CHEBI:58525"/>
        <dbReference type="EC" id="4.3.2.10"/>
    </reaction>
</comment>
<comment type="catalytic activity">
    <reaction evidence="1">
        <text>L-glutamine + H2O = L-glutamate + NH4(+)</text>
        <dbReference type="Rhea" id="RHEA:15889"/>
        <dbReference type="ChEBI" id="CHEBI:15377"/>
        <dbReference type="ChEBI" id="CHEBI:28938"/>
        <dbReference type="ChEBI" id="CHEBI:29985"/>
        <dbReference type="ChEBI" id="CHEBI:58359"/>
        <dbReference type="EC" id="3.5.1.2"/>
    </reaction>
</comment>
<comment type="pathway">
    <text evidence="1">Amino-acid biosynthesis; L-histidine biosynthesis; L-histidine from 5-phospho-alpha-D-ribose 1-diphosphate: step 5/9.</text>
</comment>
<comment type="subunit">
    <text evidence="1">Heterodimer of HisH and HisF.</text>
</comment>
<comment type="subcellular location">
    <subcellularLocation>
        <location evidence="1">Cytoplasm</location>
    </subcellularLocation>
</comment>
<feature type="chain" id="PRO_0000231701" description="Imidazole glycerol phosphate synthase subunit HisH">
    <location>
        <begin position="1"/>
        <end position="211"/>
    </location>
</feature>
<feature type="domain" description="Glutamine amidotransferase type-1" evidence="1">
    <location>
        <begin position="3"/>
        <end position="211"/>
    </location>
</feature>
<feature type="active site" description="Nucleophile" evidence="1">
    <location>
        <position position="81"/>
    </location>
</feature>
<feature type="active site" evidence="1">
    <location>
        <position position="186"/>
    </location>
</feature>
<feature type="active site" evidence="1">
    <location>
        <position position="188"/>
    </location>
</feature>
<evidence type="ECO:0000255" key="1">
    <source>
        <dbReference type="HAMAP-Rule" id="MF_00278"/>
    </source>
</evidence>
<gene>
    <name evidence="1" type="primary">hisH</name>
    <name type="ordered locus">Ava_4017</name>
</gene>
<accession>Q3M5W4</accession>
<name>HIS5_TRIV2</name>
<sequence>MPVVAVIDYEMGNLHSVCKGLEKAGATPIITHSHQELTKADAVILPGVGAFDPAVQSLRSRDLEQPIKDTIASGKPFLGICLGLQILFESSAEGTQPGLGIIKGKVRRFISEPGITIPHMGWNQLELTQPKSILWEHLPPQPWVYFVHSYYVDPVEPQVRAATVTHGTQTVTAAIAHENLMAVQFHPEKSSNIGLQILSNFVSQVREKIAA</sequence>
<protein>
    <recommendedName>
        <fullName evidence="1">Imidazole glycerol phosphate synthase subunit HisH</fullName>
        <ecNumber evidence="1">4.3.2.10</ecNumber>
    </recommendedName>
    <alternativeName>
        <fullName evidence="1">IGP synthase glutaminase subunit</fullName>
        <ecNumber evidence="1">3.5.1.2</ecNumber>
    </alternativeName>
    <alternativeName>
        <fullName evidence="1">IGP synthase subunit HisH</fullName>
    </alternativeName>
    <alternativeName>
        <fullName evidence="1">ImGP synthase subunit HisH</fullName>
        <shortName evidence="1">IGPS subunit HisH</shortName>
    </alternativeName>
</protein>